<gene>
    <name type="primary">mngA</name>
    <name type="ordered locus">PYRAB12270</name>
    <name type="ORF">PAB0816</name>
</gene>
<comment type="function">
    <text evidence="1">Transfers a mannosyl group from GDP-mannose to phosphoglycerate to form mannosyl-3-phosphoglycerate (MPG).</text>
</comment>
<comment type="catalytic activity">
    <reaction>
        <text>(2R)-3-phosphoglycerate + GDP-alpha-D-mannose = 2-O-(alpha-D-mannosyl)-3-phosphoglycerate + GDP + H(+)</text>
        <dbReference type="Rhea" id="RHEA:13537"/>
        <dbReference type="ChEBI" id="CHEBI:15378"/>
        <dbReference type="ChEBI" id="CHEBI:57527"/>
        <dbReference type="ChEBI" id="CHEBI:57744"/>
        <dbReference type="ChEBI" id="CHEBI:58189"/>
        <dbReference type="ChEBI" id="CHEBI:58272"/>
        <dbReference type="EC" id="2.4.1.217"/>
    </reaction>
</comment>
<comment type="pathway">
    <text>Carbohydrate biosynthesis; 2-(alpha-D-mannosyl)-D-glycerate biosynthesis; 2-(alpha-D-mannosyl)-D-glycerate from GDP-alpha-D-mannose (MPG route): step 1/2.</text>
</comment>
<comment type="subcellular location">
    <subcellularLocation>
        <location evidence="1">Cytoplasm</location>
    </subcellularLocation>
</comment>
<comment type="similarity">
    <text evidence="2">Belongs to the glycosyltransferase 2 family.</text>
</comment>
<accession>Q9UZC1</accession>
<accession>G8ZKM5</accession>
<reference key="1">
    <citation type="journal article" date="2003" name="Mol. Microbiol.">
        <title>An integrated analysis of the genome of the hyperthermophilic archaeon Pyrococcus abyssi.</title>
        <authorList>
            <person name="Cohen G.N."/>
            <person name="Barbe V."/>
            <person name="Flament D."/>
            <person name="Galperin M."/>
            <person name="Heilig R."/>
            <person name="Lecompte O."/>
            <person name="Poch O."/>
            <person name="Prieur D."/>
            <person name="Querellou J."/>
            <person name="Ripp R."/>
            <person name="Thierry J.-C."/>
            <person name="Van der Oost J."/>
            <person name="Weissenbach J."/>
            <person name="Zivanovic Y."/>
            <person name="Forterre P."/>
        </authorList>
    </citation>
    <scope>NUCLEOTIDE SEQUENCE [LARGE SCALE GENOMIC DNA]</scope>
    <source>
        <strain>GE5 / Orsay</strain>
    </source>
</reference>
<reference key="2">
    <citation type="journal article" date="2012" name="Curr. Microbiol.">
        <title>Re-annotation of two hyperthermophilic archaea Pyrococcus abyssi GE5 and Pyrococcus furiosus DSM 3638.</title>
        <authorList>
            <person name="Gao J."/>
            <person name="Wang J."/>
        </authorList>
    </citation>
    <scope>GENOME REANNOTATION</scope>
    <source>
        <strain>GE5 / Orsay</strain>
    </source>
</reference>
<sequence length="394" mass="45288">MLLEAPVYKEIFGAVTIHEVQKVIKMDTETEDVPVYTISNIPREKIYNLLGKMAIIVPMKNEKLHLVDGVLKAIPHKCPIIIVSNSKREGPNRYKLEVDLVRHFYNLTHSKVIMIHQKDPGLAKAFKEVGYTDILDGKGKVRSGKGEGMIIGMLLAKAIGAEYIGFVDADNYIPGSVNEYVKDYAAGFLMSESDYTMVRLHWRHKPKVTKGTLYFKKWGRVSEITNHYLNLLISEHTAFETTIMVTGNAGEHAMTMKLAEIMPFSTGYSVEPYEIVYLLERFGKWENVDEFKEVFDQGIEIFQIETLNPHFHEDKGQEHVKEMLLLSLATIYHSKLATNSLKKKILNDLREHKILKENEEPPKPLVMRPIKEIPIKEWMEIVEDNSETLLRFEL</sequence>
<keyword id="KW-0963">Cytoplasm</keyword>
<keyword id="KW-0328">Glycosyltransferase</keyword>
<keyword id="KW-0808">Transferase</keyword>
<feature type="chain" id="PRO_0000059285" description="Mannosyl-3-phosphoglycerate synthase">
    <location>
        <begin position="1"/>
        <end position="394"/>
    </location>
</feature>
<proteinExistence type="inferred from homology"/>
<organism>
    <name type="scientific">Pyrococcus abyssi (strain GE5 / Orsay)</name>
    <dbReference type="NCBI Taxonomy" id="272844"/>
    <lineage>
        <taxon>Archaea</taxon>
        <taxon>Methanobacteriati</taxon>
        <taxon>Methanobacteriota</taxon>
        <taxon>Thermococci</taxon>
        <taxon>Thermococcales</taxon>
        <taxon>Thermococcaceae</taxon>
        <taxon>Pyrococcus</taxon>
    </lineage>
</organism>
<evidence type="ECO:0000250" key="1"/>
<evidence type="ECO:0000305" key="2"/>
<protein>
    <recommendedName>
        <fullName>Mannosyl-3-phosphoglycerate synthase</fullName>
        <shortName>MPG synthase</shortName>
        <shortName>MPGS</shortName>
        <ecNumber>2.4.1.217</ecNumber>
    </recommendedName>
</protein>
<name>MPGS_PYRAB</name>
<dbReference type="EC" id="2.4.1.217"/>
<dbReference type="EMBL" id="AJ248286">
    <property type="protein sequence ID" value="CAB50138.1"/>
    <property type="molecule type" value="Genomic_DNA"/>
</dbReference>
<dbReference type="EMBL" id="HE613800">
    <property type="protein sequence ID" value="CCE70668.1"/>
    <property type="molecule type" value="Genomic_DNA"/>
</dbReference>
<dbReference type="PIR" id="E75104">
    <property type="entry name" value="E75104"/>
</dbReference>
<dbReference type="RefSeq" id="WP_010868345.1">
    <property type="nucleotide sequence ID" value="NC_000868.1"/>
</dbReference>
<dbReference type="SMR" id="Q9UZC1"/>
<dbReference type="STRING" id="272844.PAB0816"/>
<dbReference type="CAZy" id="GT55">
    <property type="family name" value="Glycosyltransferase Family 55"/>
</dbReference>
<dbReference type="KEGG" id="pab:PAB0816"/>
<dbReference type="PATRIC" id="fig|272844.11.peg.1311"/>
<dbReference type="eggNOG" id="arCOG04158">
    <property type="taxonomic scope" value="Archaea"/>
</dbReference>
<dbReference type="HOGENOM" id="CLU_028916_0_0_2"/>
<dbReference type="OrthoDB" id="9468at2157"/>
<dbReference type="PhylomeDB" id="Q9UZC1"/>
<dbReference type="UniPathway" id="UPA00130">
    <property type="reaction ID" value="UER00192"/>
</dbReference>
<dbReference type="Proteomes" id="UP000000810">
    <property type="component" value="Chromosome"/>
</dbReference>
<dbReference type="Proteomes" id="UP000009139">
    <property type="component" value="Chromosome"/>
</dbReference>
<dbReference type="GO" id="GO:0005737">
    <property type="term" value="C:cytoplasm"/>
    <property type="evidence" value="ECO:0007669"/>
    <property type="project" value="UniProtKB-SubCell"/>
</dbReference>
<dbReference type="GO" id="GO:0050504">
    <property type="term" value="F:mannosyl-3-phosphoglycerate synthase activity"/>
    <property type="evidence" value="ECO:0007669"/>
    <property type="project" value="UniProtKB-EC"/>
</dbReference>
<dbReference type="GO" id="GO:0051479">
    <property type="term" value="P:mannosylglycerate biosynthetic process"/>
    <property type="evidence" value="ECO:0007669"/>
    <property type="project" value="UniProtKB-UniPathway"/>
</dbReference>
<dbReference type="CDD" id="cd00761">
    <property type="entry name" value="Glyco_tranf_GTA_type"/>
    <property type="match status" value="1"/>
</dbReference>
<dbReference type="Gene3D" id="3.90.550.10">
    <property type="entry name" value="Spore Coat Polysaccharide Biosynthesis Protein SpsA, Chain A"/>
    <property type="match status" value="1"/>
</dbReference>
<dbReference type="InterPro" id="IPR029044">
    <property type="entry name" value="Nucleotide-diphossugar_trans"/>
</dbReference>
<dbReference type="InterPro" id="IPR012812">
    <property type="entry name" value="Osmo_MPG_synth"/>
</dbReference>
<dbReference type="NCBIfam" id="TIGR02460">
    <property type="entry name" value="osmo_MPGsynth"/>
    <property type="match status" value="1"/>
</dbReference>
<dbReference type="Pfam" id="PF09488">
    <property type="entry name" value="Osmo_MPGsynth"/>
    <property type="match status" value="1"/>
</dbReference>
<dbReference type="SUPFAM" id="SSF53448">
    <property type="entry name" value="Nucleotide-diphospho-sugar transferases"/>
    <property type="match status" value="1"/>
</dbReference>